<organism>
    <name type="scientific">Mycobacterium avium (strain 104)</name>
    <dbReference type="NCBI Taxonomy" id="243243"/>
    <lineage>
        <taxon>Bacteria</taxon>
        <taxon>Bacillati</taxon>
        <taxon>Actinomycetota</taxon>
        <taxon>Actinomycetes</taxon>
        <taxon>Mycobacteriales</taxon>
        <taxon>Mycobacteriaceae</taxon>
        <taxon>Mycobacterium</taxon>
        <taxon>Mycobacterium avium complex (MAC)</taxon>
    </lineage>
</organism>
<proteinExistence type="inferred from homology"/>
<keyword id="KW-0240">DNA-directed RNA polymerase</keyword>
<keyword id="KW-0460">Magnesium</keyword>
<keyword id="KW-0479">Metal-binding</keyword>
<keyword id="KW-0548">Nucleotidyltransferase</keyword>
<keyword id="KW-0804">Transcription</keyword>
<keyword id="KW-0808">Transferase</keyword>
<keyword id="KW-0862">Zinc</keyword>
<gene>
    <name evidence="1" type="primary">rpoC</name>
    <name type="ordered locus">MAV_4502</name>
</gene>
<name>RPOC_MYCA1</name>
<dbReference type="EC" id="2.7.7.6" evidence="1"/>
<dbReference type="EMBL" id="CP000479">
    <property type="protein sequence ID" value="ABK69395.1"/>
    <property type="molecule type" value="Genomic_DNA"/>
</dbReference>
<dbReference type="RefSeq" id="WP_011726094.1">
    <property type="nucleotide sequence ID" value="NC_008595.1"/>
</dbReference>
<dbReference type="SMR" id="A0QL48"/>
<dbReference type="KEGG" id="mav:MAV_4502"/>
<dbReference type="HOGENOM" id="CLU_000524_3_1_11"/>
<dbReference type="Proteomes" id="UP000001574">
    <property type="component" value="Chromosome"/>
</dbReference>
<dbReference type="GO" id="GO:0000428">
    <property type="term" value="C:DNA-directed RNA polymerase complex"/>
    <property type="evidence" value="ECO:0007669"/>
    <property type="project" value="UniProtKB-KW"/>
</dbReference>
<dbReference type="GO" id="GO:0003677">
    <property type="term" value="F:DNA binding"/>
    <property type="evidence" value="ECO:0007669"/>
    <property type="project" value="UniProtKB-UniRule"/>
</dbReference>
<dbReference type="GO" id="GO:0003899">
    <property type="term" value="F:DNA-directed RNA polymerase activity"/>
    <property type="evidence" value="ECO:0007669"/>
    <property type="project" value="UniProtKB-UniRule"/>
</dbReference>
<dbReference type="GO" id="GO:0000287">
    <property type="term" value="F:magnesium ion binding"/>
    <property type="evidence" value="ECO:0007669"/>
    <property type="project" value="UniProtKB-UniRule"/>
</dbReference>
<dbReference type="GO" id="GO:0008270">
    <property type="term" value="F:zinc ion binding"/>
    <property type="evidence" value="ECO:0007669"/>
    <property type="project" value="UniProtKB-UniRule"/>
</dbReference>
<dbReference type="GO" id="GO:0006351">
    <property type="term" value="P:DNA-templated transcription"/>
    <property type="evidence" value="ECO:0007669"/>
    <property type="project" value="UniProtKB-UniRule"/>
</dbReference>
<dbReference type="CDD" id="cd02655">
    <property type="entry name" value="RNAP_beta'_C"/>
    <property type="match status" value="1"/>
</dbReference>
<dbReference type="CDD" id="cd01609">
    <property type="entry name" value="RNAP_beta'_N"/>
    <property type="match status" value="1"/>
</dbReference>
<dbReference type="FunFam" id="1.10.132.30:FF:000003">
    <property type="entry name" value="DNA-directed RNA polymerase subunit beta"/>
    <property type="match status" value="1"/>
</dbReference>
<dbReference type="FunFam" id="1.10.150.390:FF:000002">
    <property type="entry name" value="DNA-directed RNA polymerase subunit beta"/>
    <property type="match status" value="1"/>
</dbReference>
<dbReference type="FunFam" id="1.10.274.100:FF:000009">
    <property type="entry name" value="DNA-directed RNA polymerase subunit beta"/>
    <property type="match status" value="1"/>
</dbReference>
<dbReference type="FunFam" id="1.10.40.90:FF:000001">
    <property type="entry name" value="DNA-directed RNA polymerase subunit beta"/>
    <property type="match status" value="1"/>
</dbReference>
<dbReference type="FunFam" id="4.10.860.120:FF:000001">
    <property type="entry name" value="DNA-directed RNA polymerase subunit beta"/>
    <property type="match status" value="1"/>
</dbReference>
<dbReference type="Gene3D" id="1.10.132.30">
    <property type="match status" value="1"/>
</dbReference>
<dbReference type="Gene3D" id="1.10.150.390">
    <property type="match status" value="1"/>
</dbReference>
<dbReference type="Gene3D" id="1.10.1790.20">
    <property type="match status" value="1"/>
</dbReference>
<dbReference type="Gene3D" id="1.10.40.90">
    <property type="match status" value="1"/>
</dbReference>
<dbReference type="Gene3D" id="2.40.40.20">
    <property type="match status" value="1"/>
</dbReference>
<dbReference type="Gene3D" id="2.40.50.100">
    <property type="match status" value="1"/>
</dbReference>
<dbReference type="Gene3D" id="4.10.860.120">
    <property type="entry name" value="RNA polymerase II, clamp domain"/>
    <property type="match status" value="1"/>
</dbReference>
<dbReference type="Gene3D" id="1.10.274.100">
    <property type="entry name" value="RNA polymerase Rpb1, domain 3"/>
    <property type="match status" value="1"/>
</dbReference>
<dbReference type="HAMAP" id="MF_01322">
    <property type="entry name" value="RNApol_bact_RpoC"/>
    <property type="match status" value="1"/>
</dbReference>
<dbReference type="InterPro" id="IPR045867">
    <property type="entry name" value="DNA-dir_RpoC_beta_prime"/>
</dbReference>
<dbReference type="InterPro" id="IPR012754">
    <property type="entry name" value="DNA-dir_RpoC_beta_prime_bact"/>
</dbReference>
<dbReference type="InterPro" id="IPR000722">
    <property type="entry name" value="RNA_pol_asu"/>
</dbReference>
<dbReference type="InterPro" id="IPR006592">
    <property type="entry name" value="RNA_pol_N"/>
</dbReference>
<dbReference type="InterPro" id="IPR007080">
    <property type="entry name" value="RNA_pol_Rpb1_1"/>
</dbReference>
<dbReference type="InterPro" id="IPR007066">
    <property type="entry name" value="RNA_pol_Rpb1_3"/>
</dbReference>
<dbReference type="InterPro" id="IPR042102">
    <property type="entry name" value="RNA_pol_Rpb1_3_sf"/>
</dbReference>
<dbReference type="InterPro" id="IPR007083">
    <property type="entry name" value="RNA_pol_Rpb1_4"/>
</dbReference>
<dbReference type="InterPro" id="IPR007081">
    <property type="entry name" value="RNA_pol_Rpb1_5"/>
</dbReference>
<dbReference type="InterPro" id="IPR044893">
    <property type="entry name" value="RNA_pol_Rpb1_clamp_domain"/>
</dbReference>
<dbReference type="InterPro" id="IPR038120">
    <property type="entry name" value="Rpb1_funnel_sf"/>
</dbReference>
<dbReference type="NCBIfam" id="NF011498">
    <property type="entry name" value="PRK14906.1"/>
    <property type="match status" value="1"/>
</dbReference>
<dbReference type="NCBIfam" id="TIGR02386">
    <property type="entry name" value="rpoC_TIGR"/>
    <property type="match status" value="1"/>
</dbReference>
<dbReference type="PANTHER" id="PTHR19376">
    <property type="entry name" value="DNA-DIRECTED RNA POLYMERASE"/>
    <property type="match status" value="1"/>
</dbReference>
<dbReference type="PANTHER" id="PTHR19376:SF54">
    <property type="entry name" value="DNA-DIRECTED RNA POLYMERASE SUBUNIT BETA"/>
    <property type="match status" value="1"/>
</dbReference>
<dbReference type="Pfam" id="PF04997">
    <property type="entry name" value="RNA_pol_Rpb1_1"/>
    <property type="match status" value="1"/>
</dbReference>
<dbReference type="Pfam" id="PF00623">
    <property type="entry name" value="RNA_pol_Rpb1_2"/>
    <property type="match status" value="1"/>
</dbReference>
<dbReference type="Pfam" id="PF04983">
    <property type="entry name" value="RNA_pol_Rpb1_3"/>
    <property type="match status" value="1"/>
</dbReference>
<dbReference type="Pfam" id="PF05000">
    <property type="entry name" value="RNA_pol_Rpb1_4"/>
    <property type="match status" value="1"/>
</dbReference>
<dbReference type="Pfam" id="PF04998">
    <property type="entry name" value="RNA_pol_Rpb1_5"/>
    <property type="match status" value="1"/>
</dbReference>
<dbReference type="SMART" id="SM00663">
    <property type="entry name" value="RPOLA_N"/>
    <property type="match status" value="1"/>
</dbReference>
<dbReference type="SUPFAM" id="SSF64484">
    <property type="entry name" value="beta and beta-prime subunits of DNA dependent RNA-polymerase"/>
    <property type="match status" value="1"/>
</dbReference>
<sequence>MLDVNFFDELRIGLATAEDIRQWSYGEVKKPETINYRTLKPEKDGLFCEKIFGPTRDWECYCGKYKRVRFKGIICERCGVEVTRAKVRRERMGHIELAAPVTHIWYFKGVPSRLGYLLDLAPKDLEKIIYFAAYVITSVDEEMRHNELSTLEAEMMVERKAVEDQRDADLEARAQKLEADLAELEAEGAKADARRKVRDSGEREMRQIRDRAQRELDRLEDIWNTFTKLAPKQLIVDENLYRELVDRYGEYFTGAMGAESIQKLIENFDIDAEAEQLRDVIRNGKGQKKLRALKRLKVVAAFQQSGNSPMGMVLDAVPVIPPELRPMVQLDGGRFATSDLNDLYRRVINRNNRLKRLIDLGAPEIIVNNEKRMLQESVDALFDNGRRGRPVTGPGNRPLKSLSDLLKGKQGRFRQNLLGKRVDYSGRSVIVVGPQLKLHQCGLPKLMALELFKPFVMKRLVDLNHAQNIKSAKRMVERQRPQVWDVLEEVIAEHPVLLNRAPTLHRLGIQAFEPMLVEGKAIQLHPLVCEAFNADFDGDQMAVHLPLSAEAQAEARILMLSSNNILSPASGRPLAMPRLDMVTGLYYLTTEVEGDKGEYRPAAKDTPEVGVYSSPAEAIMAADRGVLSVRAKIKVRLTQLRPPAEIEAELFGANGWQPGDAWMAETTLGRVLFNELLPVGYPFVNKQMHKKVQASIINDLAERYPMIVVAQTVDKLKDAGFYWATRSGVTVSMADVLVPPRKKEILDQYEERAEKVEKQFQRGALNHDERNEALVEIWKEATDEVGQALREHYPADNPIITIVDSGATGNFTQTRTLAGMKGLVTNPKGEFIPRPVKSSFREGLTVLEYFINTHGARKGLADTALRTADSGYLTRRLVDVSQDVIVREHDCETERGIVVELAERQPDGTLIRDPYIETSAYARTLGTDAVDEAGNVIVARGEDLGDPEIDALLAAGITSVKVRSVLTCTTGTGVCATCYGRSMATGKLVDIGEAVGIVAAQSIGEPGTQLTMRTFHQGGVGEDITGGLPRVQELFEARIPRGKAPIADVTGRVRLEDGERFYKITIVPDDGSEEVVYDKLSKRQRLRVFKHEDGSERVLSDGDHVEVGQQLMEGSADPHEVLRVQGPREVQIHLVREVQEVYRAQGVSIHDKHIEVIVRQMLRRVTIIDSGSTEFLPGSLIDRAEFEAENRRVVAEGGEPAAGRPVLMGITKASLATDSWLSAASFQETTRVLTDAAINCRSDKLNGLKENVIIGKLIPAGTGINRYRNIQVQPTEEARAAAYTIPSYEDQYYSPDFGQATGAAVPLDDYGYSDYR</sequence>
<evidence type="ECO:0000255" key="1">
    <source>
        <dbReference type="HAMAP-Rule" id="MF_01322"/>
    </source>
</evidence>
<protein>
    <recommendedName>
        <fullName evidence="1">DNA-directed RNA polymerase subunit beta'</fullName>
        <shortName evidence="1">RNAP subunit beta'</shortName>
        <ecNumber evidence="1">2.7.7.6</ecNumber>
    </recommendedName>
    <alternativeName>
        <fullName evidence="1">RNA polymerase subunit beta'</fullName>
    </alternativeName>
    <alternativeName>
        <fullName evidence="1">Transcriptase subunit beta'</fullName>
    </alternativeName>
</protein>
<reference key="1">
    <citation type="submission" date="2006-10" db="EMBL/GenBank/DDBJ databases">
        <authorList>
            <person name="Fleischmann R.D."/>
            <person name="Dodson R.J."/>
            <person name="Haft D.H."/>
            <person name="Merkel J.S."/>
            <person name="Nelson W.C."/>
            <person name="Fraser C.M."/>
        </authorList>
    </citation>
    <scope>NUCLEOTIDE SEQUENCE [LARGE SCALE GENOMIC DNA]</scope>
    <source>
        <strain>104</strain>
    </source>
</reference>
<accession>A0QL48</accession>
<feature type="chain" id="PRO_0000308853" description="DNA-directed RNA polymerase subunit beta'">
    <location>
        <begin position="1"/>
        <end position="1316"/>
    </location>
</feature>
<feature type="binding site" evidence="1">
    <location>
        <position position="60"/>
    </location>
    <ligand>
        <name>Zn(2+)</name>
        <dbReference type="ChEBI" id="CHEBI:29105"/>
        <label>1</label>
    </ligand>
</feature>
<feature type="binding site" evidence="1">
    <location>
        <position position="62"/>
    </location>
    <ligand>
        <name>Zn(2+)</name>
        <dbReference type="ChEBI" id="CHEBI:29105"/>
        <label>1</label>
    </ligand>
</feature>
<feature type="binding site" evidence="1">
    <location>
        <position position="75"/>
    </location>
    <ligand>
        <name>Zn(2+)</name>
        <dbReference type="ChEBI" id="CHEBI:29105"/>
        <label>1</label>
    </ligand>
</feature>
<feature type="binding site" evidence="1">
    <location>
        <position position="78"/>
    </location>
    <ligand>
        <name>Zn(2+)</name>
        <dbReference type="ChEBI" id="CHEBI:29105"/>
        <label>1</label>
    </ligand>
</feature>
<feature type="binding site" evidence="1">
    <location>
        <position position="535"/>
    </location>
    <ligand>
        <name>Mg(2+)</name>
        <dbReference type="ChEBI" id="CHEBI:18420"/>
    </ligand>
</feature>
<feature type="binding site" evidence="1">
    <location>
        <position position="537"/>
    </location>
    <ligand>
        <name>Mg(2+)</name>
        <dbReference type="ChEBI" id="CHEBI:18420"/>
    </ligand>
</feature>
<feature type="binding site" evidence="1">
    <location>
        <position position="539"/>
    </location>
    <ligand>
        <name>Mg(2+)</name>
        <dbReference type="ChEBI" id="CHEBI:18420"/>
    </ligand>
</feature>
<feature type="binding site" evidence="1">
    <location>
        <position position="891"/>
    </location>
    <ligand>
        <name>Zn(2+)</name>
        <dbReference type="ChEBI" id="CHEBI:29105"/>
        <label>2</label>
    </ligand>
</feature>
<feature type="binding site" evidence="1">
    <location>
        <position position="968"/>
    </location>
    <ligand>
        <name>Zn(2+)</name>
        <dbReference type="ChEBI" id="CHEBI:29105"/>
        <label>2</label>
    </ligand>
</feature>
<feature type="binding site" evidence="1">
    <location>
        <position position="975"/>
    </location>
    <ligand>
        <name>Zn(2+)</name>
        <dbReference type="ChEBI" id="CHEBI:29105"/>
        <label>2</label>
    </ligand>
</feature>
<feature type="binding site" evidence="1">
    <location>
        <position position="978"/>
    </location>
    <ligand>
        <name>Zn(2+)</name>
        <dbReference type="ChEBI" id="CHEBI:29105"/>
        <label>2</label>
    </ligand>
</feature>
<comment type="function">
    <text evidence="1">DNA-dependent RNA polymerase catalyzes the transcription of DNA into RNA using the four ribonucleoside triphosphates as substrates.</text>
</comment>
<comment type="catalytic activity">
    <reaction evidence="1">
        <text>RNA(n) + a ribonucleoside 5'-triphosphate = RNA(n+1) + diphosphate</text>
        <dbReference type="Rhea" id="RHEA:21248"/>
        <dbReference type="Rhea" id="RHEA-COMP:14527"/>
        <dbReference type="Rhea" id="RHEA-COMP:17342"/>
        <dbReference type="ChEBI" id="CHEBI:33019"/>
        <dbReference type="ChEBI" id="CHEBI:61557"/>
        <dbReference type="ChEBI" id="CHEBI:140395"/>
        <dbReference type="EC" id="2.7.7.6"/>
    </reaction>
</comment>
<comment type="cofactor">
    <cofactor evidence="1">
        <name>Mg(2+)</name>
        <dbReference type="ChEBI" id="CHEBI:18420"/>
    </cofactor>
    <text evidence="1">Binds 1 Mg(2+) ion per subunit.</text>
</comment>
<comment type="cofactor">
    <cofactor evidence="1">
        <name>Zn(2+)</name>
        <dbReference type="ChEBI" id="CHEBI:29105"/>
    </cofactor>
    <text evidence="1">Binds 2 Zn(2+) ions per subunit.</text>
</comment>
<comment type="subunit">
    <text evidence="1">The RNAP catalytic core consists of 2 alpha, 1 beta, 1 beta' and 1 omega subunit. When a sigma factor is associated with the core the holoenzyme is formed, which can initiate transcription.</text>
</comment>
<comment type="similarity">
    <text evidence="1">Belongs to the RNA polymerase beta' chain family.</text>
</comment>